<protein>
    <recommendedName>
        <fullName evidence="1">SsrA-binding protein</fullName>
    </recommendedName>
    <alternativeName>
        <fullName evidence="1">Small protein B</fullName>
    </alternativeName>
</protein>
<gene>
    <name evidence="1" type="primary">smpB</name>
    <name type="ordered locus">BSUIS_A0675</name>
</gene>
<evidence type="ECO:0000255" key="1">
    <source>
        <dbReference type="HAMAP-Rule" id="MF_00023"/>
    </source>
</evidence>
<evidence type="ECO:0000256" key="2">
    <source>
        <dbReference type="SAM" id="MobiDB-lite"/>
    </source>
</evidence>
<sequence>MNKPKNSPARKMIAENRKARFNFEILDTLEAGLVLTGTEVKSLRANQANIAESYASFEDGEFWLINSYIPEYTQGNRFNHEPRRLRKLLVSRREMSRLFNSVSREGMTVVPLKLYFNDRGRAKLELALARGKKTHDKRETEKKRDWNREKARLLRDRG</sequence>
<reference key="1">
    <citation type="submission" date="2007-12" db="EMBL/GenBank/DDBJ databases">
        <title>Brucella suis ATCC 23445 whole genome shotgun sequencing project.</title>
        <authorList>
            <person name="Setubal J.C."/>
            <person name="Bowns C."/>
            <person name="Boyle S."/>
            <person name="Crasta O.R."/>
            <person name="Czar M.J."/>
            <person name="Dharmanolla C."/>
            <person name="Gillespie J.J."/>
            <person name="Kenyon R.W."/>
            <person name="Lu J."/>
            <person name="Mane S."/>
            <person name="Mohapatra S."/>
            <person name="Nagrani S."/>
            <person name="Purkayastha A."/>
            <person name="Rajasimha H.K."/>
            <person name="Shallom J.M."/>
            <person name="Shallom S."/>
            <person name="Shukla M."/>
            <person name="Snyder E.E."/>
            <person name="Sobral B.W."/>
            <person name="Wattam A.R."/>
            <person name="Will R."/>
            <person name="Williams K."/>
            <person name="Yoo H."/>
            <person name="Bruce D."/>
            <person name="Detter C."/>
            <person name="Munk C."/>
            <person name="Brettin T.S."/>
        </authorList>
    </citation>
    <scope>NUCLEOTIDE SEQUENCE [LARGE SCALE GENOMIC DNA]</scope>
    <source>
        <strain>ATCC 23445 / NCTC 10510</strain>
    </source>
</reference>
<comment type="function">
    <text evidence="1">Required for rescue of stalled ribosomes mediated by trans-translation. Binds to transfer-messenger RNA (tmRNA), required for stable association of tmRNA with ribosomes. tmRNA and SmpB together mimic tRNA shape, replacing the anticodon stem-loop with SmpB. tmRNA is encoded by the ssrA gene; the 2 termini fold to resemble tRNA(Ala) and it encodes a 'tag peptide', a short internal open reading frame. During trans-translation Ala-aminoacylated tmRNA acts like a tRNA, entering the A-site of stalled ribosomes, displacing the stalled mRNA. The ribosome then switches to translate the ORF on the tmRNA; the nascent peptide is terminated with the 'tag peptide' encoded by the tmRNA and targeted for degradation. The ribosome is freed to recommence translation, which seems to be the essential function of trans-translation.</text>
</comment>
<comment type="subcellular location">
    <subcellularLocation>
        <location evidence="1">Cytoplasm</location>
    </subcellularLocation>
    <text evidence="1">The tmRNA-SmpB complex associates with stalled 70S ribosomes.</text>
</comment>
<comment type="similarity">
    <text evidence="1">Belongs to the SmpB family.</text>
</comment>
<accession>B0CKX3</accession>
<keyword id="KW-0963">Cytoplasm</keyword>
<keyword id="KW-0694">RNA-binding</keyword>
<dbReference type="EMBL" id="CP000911">
    <property type="protein sequence ID" value="ABY37753.1"/>
    <property type="molecule type" value="Genomic_DNA"/>
</dbReference>
<dbReference type="RefSeq" id="WP_002963791.1">
    <property type="nucleotide sequence ID" value="NC_010169.1"/>
</dbReference>
<dbReference type="SMR" id="B0CKX3"/>
<dbReference type="GeneID" id="97534023"/>
<dbReference type="KEGG" id="bmt:BSUIS_A0675"/>
<dbReference type="HOGENOM" id="CLU_108953_0_1_5"/>
<dbReference type="Proteomes" id="UP000008545">
    <property type="component" value="Chromosome I"/>
</dbReference>
<dbReference type="GO" id="GO:0005829">
    <property type="term" value="C:cytosol"/>
    <property type="evidence" value="ECO:0007669"/>
    <property type="project" value="TreeGrafter"/>
</dbReference>
<dbReference type="GO" id="GO:0003723">
    <property type="term" value="F:RNA binding"/>
    <property type="evidence" value="ECO:0007669"/>
    <property type="project" value="UniProtKB-UniRule"/>
</dbReference>
<dbReference type="GO" id="GO:0070929">
    <property type="term" value="P:trans-translation"/>
    <property type="evidence" value="ECO:0007669"/>
    <property type="project" value="UniProtKB-UniRule"/>
</dbReference>
<dbReference type="CDD" id="cd09294">
    <property type="entry name" value="SmpB"/>
    <property type="match status" value="1"/>
</dbReference>
<dbReference type="Gene3D" id="2.40.280.10">
    <property type="match status" value="1"/>
</dbReference>
<dbReference type="HAMAP" id="MF_00023">
    <property type="entry name" value="SmpB"/>
    <property type="match status" value="1"/>
</dbReference>
<dbReference type="InterPro" id="IPR023620">
    <property type="entry name" value="SmpB"/>
</dbReference>
<dbReference type="InterPro" id="IPR000037">
    <property type="entry name" value="SsrA-bd_prot"/>
</dbReference>
<dbReference type="InterPro" id="IPR020081">
    <property type="entry name" value="SsrA-bd_prot_CS"/>
</dbReference>
<dbReference type="NCBIfam" id="NF003843">
    <property type="entry name" value="PRK05422.1"/>
    <property type="match status" value="1"/>
</dbReference>
<dbReference type="NCBIfam" id="TIGR00086">
    <property type="entry name" value="smpB"/>
    <property type="match status" value="1"/>
</dbReference>
<dbReference type="PANTHER" id="PTHR30308:SF2">
    <property type="entry name" value="SSRA-BINDING PROTEIN"/>
    <property type="match status" value="1"/>
</dbReference>
<dbReference type="PANTHER" id="PTHR30308">
    <property type="entry name" value="TMRNA-BINDING COMPONENT OF TRANS-TRANSLATION TAGGING COMPLEX"/>
    <property type="match status" value="1"/>
</dbReference>
<dbReference type="Pfam" id="PF01668">
    <property type="entry name" value="SmpB"/>
    <property type="match status" value="1"/>
</dbReference>
<dbReference type="SUPFAM" id="SSF74982">
    <property type="entry name" value="Small protein B (SmpB)"/>
    <property type="match status" value="1"/>
</dbReference>
<dbReference type="PROSITE" id="PS01317">
    <property type="entry name" value="SSRP"/>
    <property type="match status" value="1"/>
</dbReference>
<organism>
    <name type="scientific">Brucella suis (strain ATCC 23445 / NCTC 10510)</name>
    <dbReference type="NCBI Taxonomy" id="470137"/>
    <lineage>
        <taxon>Bacteria</taxon>
        <taxon>Pseudomonadati</taxon>
        <taxon>Pseudomonadota</taxon>
        <taxon>Alphaproteobacteria</taxon>
        <taxon>Hyphomicrobiales</taxon>
        <taxon>Brucellaceae</taxon>
        <taxon>Brucella/Ochrobactrum group</taxon>
        <taxon>Brucella</taxon>
    </lineage>
</organism>
<feature type="chain" id="PRO_1000074344" description="SsrA-binding protein">
    <location>
        <begin position="1"/>
        <end position="158"/>
    </location>
</feature>
<feature type="region of interest" description="Disordered" evidence="2">
    <location>
        <begin position="131"/>
        <end position="158"/>
    </location>
</feature>
<feature type="compositionally biased region" description="Basic and acidic residues" evidence="2">
    <location>
        <begin position="136"/>
        <end position="158"/>
    </location>
</feature>
<name>SSRP_BRUSI</name>
<proteinExistence type="inferred from homology"/>